<accession>C4Y9X0</accession>
<gene>
    <name evidence="1" type="primary">DRE2</name>
    <name type="ORF">CLUG_05191</name>
</gene>
<organism>
    <name type="scientific">Clavispora lusitaniae (strain ATCC 42720)</name>
    <name type="common">Yeast</name>
    <name type="synonym">Candida lusitaniae</name>
    <dbReference type="NCBI Taxonomy" id="306902"/>
    <lineage>
        <taxon>Eukaryota</taxon>
        <taxon>Fungi</taxon>
        <taxon>Dikarya</taxon>
        <taxon>Ascomycota</taxon>
        <taxon>Saccharomycotina</taxon>
        <taxon>Pichiomycetes</taxon>
        <taxon>Metschnikowiaceae</taxon>
        <taxon>Clavispora</taxon>
    </lineage>
</organism>
<proteinExistence type="inferred from homology"/>
<evidence type="ECO:0000255" key="1">
    <source>
        <dbReference type="HAMAP-Rule" id="MF_03115"/>
    </source>
</evidence>
<evidence type="ECO:0000256" key="2">
    <source>
        <dbReference type="SAM" id="MobiDB-lite"/>
    </source>
</evidence>
<sequence length="331" mass="36200">MSEILLLLHPTVVTEESLVESAKSGLSGKFPEASLTQHIIDRIANDMVELPSSHFDHIHYVNPNKSHLSIPPSVMAKLFASLKNGGELSGDLPKDQDLDVLMNGFIVKDDGSWSKPAPVSTVLLRKKKPAETAARKMPTFKKPVSSPVTLTDTSANNTDAEDDLSMKRKLDSTKLAYFSDDSSGEEDDLIDENELIADSHKFNVNIVVPKKCELPNGKKRKKACKDCTCGLKELEEQEEQATRNLQDTLLGKMAQSATLEAIKIEERLKKSQVQFSAQDLTEIDFTVEGKTGGCSSCALGDAFRCDGCPYLGLPPFKPGEVVTLDSFGEDI</sequence>
<keyword id="KW-0001">2Fe-2S</keyword>
<keyword id="KW-0004">4Fe-4S</keyword>
<keyword id="KW-0963">Cytoplasm</keyword>
<keyword id="KW-0408">Iron</keyword>
<keyword id="KW-0411">Iron-sulfur</keyword>
<keyword id="KW-0479">Metal-binding</keyword>
<keyword id="KW-0496">Mitochondrion</keyword>
<keyword id="KW-1185">Reference proteome</keyword>
<protein>
    <recommendedName>
        <fullName evidence="1">Fe-S cluster assembly protein DRE2</fullName>
    </recommendedName>
    <alternativeName>
        <fullName evidence="1">Anamorsin homolog</fullName>
    </alternativeName>
</protein>
<feature type="chain" id="PRO_0000392384" description="Fe-S cluster assembly protein DRE2">
    <location>
        <begin position="1"/>
        <end position="331"/>
    </location>
</feature>
<feature type="region of interest" description="N-terminal SAM-like domain" evidence="1">
    <location>
        <begin position="1"/>
        <end position="146"/>
    </location>
</feature>
<feature type="region of interest" description="Disordered" evidence="2">
    <location>
        <begin position="142"/>
        <end position="164"/>
    </location>
</feature>
<feature type="region of interest" description="Linker" evidence="1">
    <location>
        <begin position="147"/>
        <end position="202"/>
    </location>
</feature>
<feature type="region of interest" description="Fe-S binding site A" evidence="1">
    <location>
        <begin position="212"/>
        <end position="229"/>
    </location>
</feature>
<feature type="region of interest" description="Fe-S binding site B" evidence="1">
    <location>
        <begin position="294"/>
        <end position="308"/>
    </location>
</feature>
<feature type="short sequence motif" description="Cx2C motif 1" evidence="1">
    <location>
        <begin position="294"/>
        <end position="297"/>
    </location>
</feature>
<feature type="short sequence motif" description="Cx2C motif 2" evidence="1">
    <location>
        <begin position="305"/>
        <end position="308"/>
    </location>
</feature>
<feature type="compositionally biased region" description="Polar residues" evidence="2">
    <location>
        <begin position="146"/>
        <end position="158"/>
    </location>
</feature>
<feature type="binding site" evidence="1">
    <location>
        <position position="212"/>
    </location>
    <ligand>
        <name>[2Fe-2S] cluster</name>
        <dbReference type="ChEBI" id="CHEBI:190135"/>
    </ligand>
</feature>
<feature type="binding site" evidence="1">
    <location>
        <position position="224"/>
    </location>
    <ligand>
        <name>[2Fe-2S] cluster</name>
        <dbReference type="ChEBI" id="CHEBI:190135"/>
    </ligand>
</feature>
<feature type="binding site" evidence="1">
    <location>
        <position position="227"/>
    </location>
    <ligand>
        <name>[2Fe-2S] cluster</name>
        <dbReference type="ChEBI" id="CHEBI:190135"/>
    </ligand>
</feature>
<feature type="binding site" evidence="1">
    <location>
        <position position="229"/>
    </location>
    <ligand>
        <name>[2Fe-2S] cluster</name>
        <dbReference type="ChEBI" id="CHEBI:190135"/>
    </ligand>
</feature>
<feature type="binding site" evidence="1">
    <location>
        <position position="294"/>
    </location>
    <ligand>
        <name>[4Fe-4S] cluster</name>
        <dbReference type="ChEBI" id="CHEBI:49883"/>
    </ligand>
</feature>
<feature type="binding site" evidence="1">
    <location>
        <position position="297"/>
    </location>
    <ligand>
        <name>[4Fe-4S] cluster</name>
        <dbReference type="ChEBI" id="CHEBI:49883"/>
    </ligand>
</feature>
<feature type="binding site" evidence="1">
    <location>
        <position position="305"/>
    </location>
    <ligand>
        <name>[4Fe-4S] cluster</name>
        <dbReference type="ChEBI" id="CHEBI:49883"/>
    </ligand>
</feature>
<feature type="binding site" evidence="1">
    <location>
        <position position="308"/>
    </location>
    <ligand>
        <name>[4Fe-4S] cluster</name>
        <dbReference type="ChEBI" id="CHEBI:49883"/>
    </ligand>
</feature>
<name>DRE2_CLAL4</name>
<dbReference type="EMBL" id="CH408081">
    <property type="protein sequence ID" value="EEQ41063.1"/>
    <property type="molecule type" value="Genomic_DNA"/>
</dbReference>
<dbReference type="RefSeq" id="XP_002615176.1">
    <property type="nucleotide sequence ID" value="XM_002615130.1"/>
</dbReference>
<dbReference type="SMR" id="C4Y9X0"/>
<dbReference type="FunCoup" id="C4Y9X0">
    <property type="interactions" value="168"/>
</dbReference>
<dbReference type="STRING" id="306902.C4Y9X0"/>
<dbReference type="GeneID" id="8495728"/>
<dbReference type="KEGG" id="clu:CLUG_05191"/>
<dbReference type="VEuPathDB" id="FungiDB:CLUG_05191"/>
<dbReference type="HOGENOM" id="CLU_067152_0_0_1"/>
<dbReference type="InParanoid" id="C4Y9X0"/>
<dbReference type="OMA" id="TMITCGK"/>
<dbReference type="OrthoDB" id="118221at4891"/>
<dbReference type="Proteomes" id="UP000007703">
    <property type="component" value="Unassembled WGS sequence"/>
</dbReference>
<dbReference type="GO" id="GO:0097361">
    <property type="term" value="C:cytosolic [4Fe-4S] assembly targeting complex"/>
    <property type="evidence" value="ECO:0007669"/>
    <property type="project" value="EnsemblFungi"/>
</dbReference>
<dbReference type="GO" id="GO:0005758">
    <property type="term" value="C:mitochondrial intermembrane space"/>
    <property type="evidence" value="ECO:0007669"/>
    <property type="project" value="UniProtKB-SubCell"/>
</dbReference>
<dbReference type="GO" id="GO:0051537">
    <property type="term" value="F:2 iron, 2 sulfur cluster binding"/>
    <property type="evidence" value="ECO:0007669"/>
    <property type="project" value="UniProtKB-UniRule"/>
</dbReference>
<dbReference type="GO" id="GO:0051539">
    <property type="term" value="F:4 iron, 4 sulfur cluster binding"/>
    <property type="evidence" value="ECO:0007669"/>
    <property type="project" value="UniProtKB-KW"/>
</dbReference>
<dbReference type="GO" id="GO:0009055">
    <property type="term" value="F:electron transfer activity"/>
    <property type="evidence" value="ECO:0007669"/>
    <property type="project" value="UniProtKB-UniRule"/>
</dbReference>
<dbReference type="GO" id="GO:0046872">
    <property type="term" value="F:metal ion binding"/>
    <property type="evidence" value="ECO:0007669"/>
    <property type="project" value="UniProtKB-KW"/>
</dbReference>
<dbReference type="GO" id="GO:0034599">
    <property type="term" value="P:cellular response to oxidative stress"/>
    <property type="evidence" value="ECO:0007669"/>
    <property type="project" value="EnsemblFungi"/>
</dbReference>
<dbReference type="GO" id="GO:0016226">
    <property type="term" value="P:iron-sulfur cluster assembly"/>
    <property type="evidence" value="ECO:0007669"/>
    <property type="project" value="UniProtKB-UniRule"/>
</dbReference>
<dbReference type="GO" id="GO:1901299">
    <property type="term" value="P:negative regulation of hydrogen peroxide-mediated programmed cell death"/>
    <property type="evidence" value="ECO:0007669"/>
    <property type="project" value="EnsemblFungi"/>
</dbReference>
<dbReference type="GO" id="GO:0045019">
    <property type="term" value="P:negative regulation of nitric oxide biosynthetic process"/>
    <property type="evidence" value="ECO:0007669"/>
    <property type="project" value="EnsemblFungi"/>
</dbReference>
<dbReference type="Gene3D" id="3.40.50.11000">
    <property type="entry name" value="Fe-S cluster assembly protein Dre2, N-terminal domain"/>
    <property type="match status" value="1"/>
</dbReference>
<dbReference type="HAMAP" id="MF_03115">
    <property type="entry name" value="Anamorsin"/>
    <property type="match status" value="1"/>
</dbReference>
<dbReference type="InterPro" id="IPR007785">
    <property type="entry name" value="Anamorsin"/>
</dbReference>
<dbReference type="InterPro" id="IPR046408">
    <property type="entry name" value="CIAPIN1"/>
</dbReference>
<dbReference type="InterPro" id="IPR031838">
    <property type="entry name" value="Dre2_N"/>
</dbReference>
<dbReference type="PANTHER" id="PTHR13273">
    <property type="entry name" value="ANAMORSIN"/>
    <property type="match status" value="1"/>
</dbReference>
<dbReference type="PANTHER" id="PTHR13273:SF14">
    <property type="entry name" value="ANAMORSIN"/>
    <property type="match status" value="1"/>
</dbReference>
<dbReference type="Pfam" id="PF05093">
    <property type="entry name" value="CIAPIN1"/>
    <property type="match status" value="1"/>
</dbReference>
<dbReference type="Pfam" id="PF16803">
    <property type="entry name" value="DRE2_N"/>
    <property type="match status" value="1"/>
</dbReference>
<reference key="1">
    <citation type="journal article" date="2009" name="Nature">
        <title>Evolution of pathogenicity and sexual reproduction in eight Candida genomes.</title>
        <authorList>
            <person name="Butler G."/>
            <person name="Rasmussen M.D."/>
            <person name="Lin M.F."/>
            <person name="Santos M.A.S."/>
            <person name="Sakthikumar S."/>
            <person name="Munro C.A."/>
            <person name="Rheinbay E."/>
            <person name="Grabherr M."/>
            <person name="Forche A."/>
            <person name="Reedy J.L."/>
            <person name="Agrafioti I."/>
            <person name="Arnaud M.B."/>
            <person name="Bates S."/>
            <person name="Brown A.J.P."/>
            <person name="Brunke S."/>
            <person name="Costanzo M.C."/>
            <person name="Fitzpatrick D.A."/>
            <person name="de Groot P.W.J."/>
            <person name="Harris D."/>
            <person name="Hoyer L.L."/>
            <person name="Hube B."/>
            <person name="Klis F.M."/>
            <person name="Kodira C."/>
            <person name="Lennard N."/>
            <person name="Logue M.E."/>
            <person name="Martin R."/>
            <person name="Neiman A.M."/>
            <person name="Nikolaou E."/>
            <person name="Quail M.A."/>
            <person name="Quinn J."/>
            <person name="Santos M.C."/>
            <person name="Schmitzberger F.F."/>
            <person name="Sherlock G."/>
            <person name="Shah P."/>
            <person name="Silverstein K.A.T."/>
            <person name="Skrzypek M.S."/>
            <person name="Soll D."/>
            <person name="Staggs R."/>
            <person name="Stansfield I."/>
            <person name="Stumpf M.P.H."/>
            <person name="Sudbery P.E."/>
            <person name="Srikantha T."/>
            <person name="Zeng Q."/>
            <person name="Berman J."/>
            <person name="Berriman M."/>
            <person name="Heitman J."/>
            <person name="Gow N.A.R."/>
            <person name="Lorenz M.C."/>
            <person name="Birren B.W."/>
            <person name="Kellis M."/>
            <person name="Cuomo C.A."/>
        </authorList>
    </citation>
    <scope>NUCLEOTIDE SEQUENCE [LARGE SCALE GENOMIC DNA]</scope>
    <source>
        <strain>ATCC 42720</strain>
    </source>
</reference>
<comment type="function">
    <text evidence="1">Component of the cytosolic iron-sulfur (Fe-S) protein assembly (CIA) machinery required for the maturation of extramitochondrial Fe-S proteins. Part of an electron transfer chain functioning in an early step of cytosolic Fe-S biogenesis, facilitating the de novo assembly of a [4Fe-4S] cluster on the scaffold complex CFD1-NBP35. Electrons are transferred to DRE2 from NADPH via the FAD- and FMN-containing protein TAH18. TAH18-DRE2 are also required for the assembly of the diferric tyrosyl radical cofactor of ribonucleotide reductase (RNR), probably by providing electrons for reduction during radical cofactor maturation in the catalytic small subunit RNR2.</text>
</comment>
<comment type="cofactor">
    <cofactor evidence="1">
        <name>[2Fe-2S] cluster</name>
        <dbReference type="ChEBI" id="CHEBI:190135"/>
    </cofactor>
</comment>
<comment type="cofactor">
    <cofactor evidence="1">
        <name>[4Fe-4S] cluster</name>
        <dbReference type="ChEBI" id="CHEBI:49883"/>
    </cofactor>
</comment>
<comment type="subunit">
    <text evidence="1">Monomer. Interacts with TAH18. Interacts with MIA40.</text>
</comment>
<comment type="subcellular location">
    <subcellularLocation>
        <location evidence="1">Cytoplasm</location>
    </subcellularLocation>
    <subcellularLocation>
        <location evidence="1">Mitochondrion intermembrane space</location>
    </subcellularLocation>
</comment>
<comment type="domain">
    <text evidence="1">The C-terminal domain binds 2 Fe-S clusters but is otherwise mostly in an intrinsically disordered conformation.</text>
</comment>
<comment type="domain">
    <text evidence="1">The N-terminal domain has structural similarity with S-adenosyl-L-methionine-dependent methyltransferases, but does not bind S-adenosyl-L-methionine. It is required for correct assembly of the 2 Fe-S clusters.</text>
</comment>
<comment type="domain">
    <text evidence="1">The twin Cx2C motifs are involved in the recognition by the mitochondrial MIA40-ERV1 disulfide relay system. The formation of 2 disulfide bonds in the Cx2C motifs through dithiol/disulfide exchange reactions effectively traps the protein in the mitochondrial intermembrane space.</text>
</comment>
<comment type="similarity">
    <text evidence="1">Belongs to the anamorsin family.</text>
</comment>